<feature type="chain" id="PRO_0000269943" description="Macrolide export ATP-binding/permease protein MacB">
    <location>
        <begin position="1"/>
        <end position="696"/>
    </location>
</feature>
<feature type="transmembrane region" description="Helical" evidence="1">
    <location>
        <begin position="324"/>
        <end position="344"/>
    </location>
</feature>
<feature type="transmembrane region" description="Helical" evidence="1">
    <location>
        <begin position="576"/>
        <end position="596"/>
    </location>
</feature>
<feature type="transmembrane region" description="Helical" evidence="1">
    <location>
        <begin position="626"/>
        <end position="646"/>
    </location>
</feature>
<feature type="transmembrane region" description="Helical" evidence="1">
    <location>
        <begin position="659"/>
        <end position="679"/>
    </location>
</feature>
<feature type="domain" description="ABC transporter" evidence="1">
    <location>
        <begin position="6"/>
        <end position="244"/>
    </location>
</feature>
<feature type="region of interest" description="Disordered" evidence="2">
    <location>
        <begin position="254"/>
        <end position="287"/>
    </location>
</feature>
<feature type="compositionally biased region" description="Basic and acidic residues" evidence="2">
    <location>
        <begin position="255"/>
        <end position="274"/>
    </location>
</feature>
<feature type="compositionally biased region" description="Low complexity" evidence="2">
    <location>
        <begin position="275"/>
        <end position="284"/>
    </location>
</feature>
<feature type="binding site" evidence="1">
    <location>
        <begin position="42"/>
        <end position="49"/>
    </location>
    <ligand>
        <name>ATP</name>
        <dbReference type="ChEBI" id="CHEBI:30616"/>
    </ligand>
</feature>
<proteinExistence type="inferred from homology"/>
<protein>
    <recommendedName>
        <fullName evidence="1">Macrolide export ATP-binding/permease protein MacB</fullName>
        <ecNumber evidence="1">7.6.2.-</ecNumber>
    </recommendedName>
</protein>
<comment type="function">
    <text evidence="1">Part of the tripartite efflux system MacAB-TolC. MacB is a non-canonical ABC transporter that contains transmembrane domains (TMD), which form a pore in the inner membrane, and an ATP-binding domain (NBD), which is responsible for energy generation. Confers resistance against macrolides.</text>
</comment>
<comment type="subunit">
    <text evidence="1">Homodimer. Part of the tripartite efflux system MacAB-TolC, which is composed of an inner membrane transporter, MacB, a periplasmic membrane fusion protein, MacA, and an outer membrane component, TolC. The complex forms a large protein conduit and can translocate molecules across both the inner and outer membranes. Interacts with MacA.</text>
</comment>
<comment type="subcellular location">
    <subcellularLocation>
        <location evidence="1">Cell inner membrane</location>
        <topology evidence="1">Multi-pass membrane protein</topology>
    </subcellularLocation>
</comment>
<comment type="similarity">
    <text evidence="1">Belongs to the ABC transporter superfamily. Macrolide exporter (TC 3.A.1.122) family.</text>
</comment>
<evidence type="ECO:0000255" key="1">
    <source>
        <dbReference type="HAMAP-Rule" id="MF_01720"/>
    </source>
</evidence>
<evidence type="ECO:0000256" key="2">
    <source>
        <dbReference type="SAM" id="MobiDB-lite"/>
    </source>
</evidence>
<dbReference type="EC" id="7.6.2.-" evidence="1"/>
<dbReference type="EMBL" id="AE017143">
    <property type="protein sequence ID" value="AAP95897.1"/>
    <property type="molecule type" value="Genomic_DNA"/>
</dbReference>
<dbReference type="RefSeq" id="WP_010944947.1">
    <property type="nucleotide sequence ID" value="NC_002940.2"/>
</dbReference>
<dbReference type="SMR" id="Q7VMF9"/>
<dbReference type="STRING" id="233412.HD_1019"/>
<dbReference type="KEGG" id="hdu:HD_1019"/>
<dbReference type="eggNOG" id="COG0577">
    <property type="taxonomic scope" value="Bacteria"/>
</dbReference>
<dbReference type="eggNOG" id="COG1136">
    <property type="taxonomic scope" value="Bacteria"/>
</dbReference>
<dbReference type="HOGENOM" id="CLU_000604_78_1_6"/>
<dbReference type="OrthoDB" id="9770036at2"/>
<dbReference type="Proteomes" id="UP000001022">
    <property type="component" value="Chromosome"/>
</dbReference>
<dbReference type="GO" id="GO:0005886">
    <property type="term" value="C:plasma membrane"/>
    <property type="evidence" value="ECO:0007669"/>
    <property type="project" value="UniProtKB-SubCell"/>
</dbReference>
<dbReference type="GO" id="GO:0005524">
    <property type="term" value="F:ATP binding"/>
    <property type="evidence" value="ECO:0007669"/>
    <property type="project" value="UniProtKB-KW"/>
</dbReference>
<dbReference type="GO" id="GO:0016887">
    <property type="term" value="F:ATP hydrolysis activity"/>
    <property type="evidence" value="ECO:0007669"/>
    <property type="project" value="InterPro"/>
</dbReference>
<dbReference type="GO" id="GO:0022857">
    <property type="term" value="F:transmembrane transporter activity"/>
    <property type="evidence" value="ECO:0007669"/>
    <property type="project" value="TreeGrafter"/>
</dbReference>
<dbReference type="GO" id="GO:0046677">
    <property type="term" value="P:response to antibiotic"/>
    <property type="evidence" value="ECO:0007669"/>
    <property type="project" value="UniProtKB-KW"/>
</dbReference>
<dbReference type="CDD" id="cd03255">
    <property type="entry name" value="ABC_MJ0796_LolCDE_FtsE"/>
    <property type="match status" value="1"/>
</dbReference>
<dbReference type="FunFam" id="3.40.50.300:FF:000032">
    <property type="entry name" value="Export ABC transporter ATP-binding protein"/>
    <property type="match status" value="1"/>
</dbReference>
<dbReference type="Gene3D" id="3.40.50.300">
    <property type="entry name" value="P-loop containing nucleotide triphosphate hydrolases"/>
    <property type="match status" value="1"/>
</dbReference>
<dbReference type="InterPro" id="IPR003593">
    <property type="entry name" value="AAA+_ATPase"/>
</dbReference>
<dbReference type="InterPro" id="IPR003838">
    <property type="entry name" value="ABC3_permease_C"/>
</dbReference>
<dbReference type="InterPro" id="IPR003439">
    <property type="entry name" value="ABC_transporter-like_ATP-bd"/>
</dbReference>
<dbReference type="InterPro" id="IPR017871">
    <property type="entry name" value="ABC_transporter-like_CS"/>
</dbReference>
<dbReference type="InterPro" id="IPR017911">
    <property type="entry name" value="MacB-like_ATP-bd"/>
</dbReference>
<dbReference type="InterPro" id="IPR025857">
    <property type="entry name" value="MacB_PCD"/>
</dbReference>
<dbReference type="InterPro" id="IPR050250">
    <property type="entry name" value="Macrolide_Exporter_MacB"/>
</dbReference>
<dbReference type="InterPro" id="IPR027417">
    <property type="entry name" value="P-loop_NTPase"/>
</dbReference>
<dbReference type="PANTHER" id="PTHR30572:SF14">
    <property type="entry name" value="MACROLIDE EXPORT ATP-BINDING_PERMEASE PROTEIN MACB"/>
    <property type="match status" value="1"/>
</dbReference>
<dbReference type="PANTHER" id="PTHR30572">
    <property type="entry name" value="MEMBRANE COMPONENT OF TRANSPORTER-RELATED"/>
    <property type="match status" value="1"/>
</dbReference>
<dbReference type="Pfam" id="PF00005">
    <property type="entry name" value="ABC_tran"/>
    <property type="match status" value="1"/>
</dbReference>
<dbReference type="Pfam" id="PF02687">
    <property type="entry name" value="FtsX"/>
    <property type="match status" value="1"/>
</dbReference>
<dbReference type="Pfam" id="PF12704">
    <property type="entry name" value="MacB_PCD"/>
    <property type="match status" value="1"/>
</dbReference>
<dbReference type="SMART" id="SM00382">
    <property type="entry name" value="AAA"/>
    <property type="match status" value="1"/>
</dbReference>
<dbReference type="SUPFAM" id="SSF52540">
    <property type="entry name" value="P-loop containing nucleoside triphosphate hydrolases"/>
    <property type="match status" value="1"/>
</dbReference>
<dbReference type="PROSITE" id="PS00211">
    <property type="entry name" value="ABC_TRANSPORTER_1"/>
    <property type="match status" value="1"/>
</dbReference>
<dbReference type="PROSITE" id="PS50893">
    <property type="entry name" value="ABC_TRANSPORTER_2"/>
    <property type="match status" value="1"/>
</dbReference>
<dbReference type="PROSITE" id="PS51267">
    <property type="entry name" value="MACB"/>
    <property type="match status" value="1"/>
</dbReference>
<reference key="1">
    <citation type="submission" date="2003-06" db="EMBL/GenBank/DDBJ databases">
        <title>The complete genome sequence of Haemophilus ducreyi.</title>
        <authorList>
            <person name="Munson R.S. Jr."/>
            <person name="Ray W.C."/>
            <person name="Mahairas G."/>
            <person name="Sabo P."/>
            <person name="Mungur R."/>
            <person name="Johnson L."/>
            <person name="Nguyen D."/>
            <person name="Wang J."/>
            <person name="Forst C."/>
            <person name="Hood L."/>
        </authorList>
    </citation>
    <scope>NUCLEOTIDE SEQUENCE [LARGE SCALE GENOMIC DNA]</scope>
    <source>
        <strain>35000HP / ATCC 700724</strain>
    </source>
</reference>
<keyword id="KW-0046">Antibiotic resistance</keyword>
<keyword id="KW-0067">ATP-binding</keyword>
<keyword id="KW-0997">Cell inner membrane</keyword>
<keyword id="KW-1003">Cell membrane</keyword>
<keyword id="KW-0472">Membrane</keyword>
<keyword id="KW-0547">Nucleotide-binding</keyword>
<keyword id="KW-1185">Reference proteome</keyword>
<keyword id="KW-1278">Translocase</keyword>
<keyword id="KW-0812">Transmembrane</keyword>
<keyword id="KW-1133">Transmembrane helix</keyword>
<keyword id="KW-0813">Transport</keyword>
<accession>Q7VMF9</accession>
<gene>
    <name evidence="1" type="primary">macB</name>
    <name type="ordered locus">HD_1019</name>
</gene>
<sequence length="696" mass="77356">MKQPLIELKNIERYHTNGDTLTTVLKSINLKIYSGEMVAIVGASGSGKSTLMNIIGALDVPNSGEYFIYGRNIADLSGDELAELRCRHFGFVFQRYHLLSHLTAVKNVEVPAIYAMADKILRNQRANALLCQLGLEKQLENKPAQLSGGQQQRVSIARALMNGGDIILADEPTGALDSQSSQDVLKILKDLNRKGHTVILITHDLAIAEHADRVICIQDGKIVSDTANALESMIKPQNKRTFIDDAVIEVCQQHNTEKLNRPNEKNNIDNDNKENNNGYNRNDNSFLNNPKKKLNSSILRSFNSYAESFFMAFNMMMAHKIRTFLTMLGIIIGIIAVVFVIALGEGTKKKVLDEFSSLGNNTIDIFPGKWGDESDNVHTLNMEDLELLYQQPYVQRATPVLLHIAKARYLNKTMRSLINGVSHDFFMLKNYQLVTGRLFDQNDLTLSQPVGVIDKKSAKLLFDMDDPINKIIFIDDIPLSIIGVVESSSLQQNSGKEILIWIPHSTMATRILNQSYIQQISVQLQPNVSPLKSDKAIIDLLTIKHGQKDFYTFSSSRFLQSLNKTTQALTLMISSIAFISLIVGGIGIMNIMLVSVIERTKEIGIRIAVGAKERDIRFQFLIESTMVSLIGGCIGVGCALLFGGLFSLAETSIKIQFTLSSFLIAFLCSSMIGIVFGYFPARNAAKLRPVDALSRE</sequence>
<organism>
    <name type="scientific">Haemophilus ducreyi (strain 35000HP / ATCC 700724)</name>
    <dbReference type="NCBI Taxonomy" id="233412"/>
    <lineage>
        <taxon>Bacteria</taxon>
        <taxon>Pseudomonadati</taxon>
        <taxon>Pseudomonadota</taxon>
        <taxon>Gammaproteobacteria</taxon>
        <taxon>Pasteurellales</taxon>
        <taxon>Pasteurellaceae</taxon>
        <taxon>Haemophilus</taxon>
    </lineage>
</organism>
<name>MACB_HAEDU</name>